<keyword id="KW-0106">Calcium</keyword>
<keyword id="KW-1015">Disulfide bond</keyword>
<keyword id="KW-1199">Hemostasis impairing toxin</keyword>
<keyword id="KW-0378">Hydrolase</keyword>
<keyword id="KW-0442">Lipid degradation</keyword>
<keyword id="KW-0443">Lipid metabolism</keyword>
<keyword id="KW-0479">Metal-binding</keyword>
<keyword id="KW-1201">Platelet aggregation inhibiting toxin</keyword>
<keyword id="KW-0964">Secreted</keyword>
<keyword id="KW-0732">Signal</keyword>
<keyword id="KW-0800">Toxin</keyword>
<proteinExistence type="evidence at transcript level"/>
<dbReference type="EC" id="3.1.1.4"/>
<dbReference type="EMBL" id="AF184127">
    <property type="protein sequence ID" value="AAD56550.1"/>
    <property type="molecule type" value="mRNA"/>
</dbReference>
<dbReference type="EMBL" id="AF184129">
    <property type="protein sequence ID" value="AAD56552.1"/>
    <property type="molecule type" value="mRNA"/>
</dbReference>
<dbReference type="SMR" id="Q9PRG0"/>
<dbReference type="GO" id="GO:0005576">
    <property type="term" value="C:extracellular region"/>
    <property type="evidence" value="ECO:0007669"/>
    <property type="project" value="UniProtKB-SubCell"/>
</dbReference>
<dbReference type="GO" id="GO:0005509">
    <property type="term" value="F:calcium ion binding"/>
    <property type="evidence" value="ECO:0007669"/>
    <property type="project" value="InterPro"/>
</dbReference>
<dbReference type="GO" id="GO:0047498">
    <property type="term" value="F:calcium-dependent phospholipase A2 activity"/>
    <property type="evidence" value="ECO:0007669"/>
    <property type="project" value="TreeGrafter"/>
</dbReference>
<dbReference type="GO" id="GO:0005543">
    <property type="term" value="F:phospholipid binding"/>
    <property type="evidence" value="ECO:0007669"/>
    <property type="project" value="TreeGrafter"/>
</dbReference>
<dbReference type="GO" id="GO:0090729">
    <property type="term" value="F:toxin activity"/>
    <property type="evidence" value="ECO:0007669"/>
    <property type="project" value="UniProtKB-KW"/>
</dbReference>
<dbReference type="GO" id="GO:0050482">
    <property type="term" value="P:arachidonate secretion"/>
    <property type="evidence" value="ECO:0007669"/>
    <property type="project" value="InterPro"/>
</dbReference>
<dbReference type="GO" id="GO:0016042">
    <property type="term" value="P:lipid catabolic process"/>
    <property type="evidence" value="ECO:0007669"/>
    <property type="project" value="UniProtKB-KW"/>
</dbReference>
<dbReference type="GO" id="GO:0006644">
    <property type="term" value="P:phospholipid metabolic process"/>
    <property type="evidence" value="ECO:0007669"/>
    <property type="project" value="InterPro"/>
</dbReference>
<dbReference type="CDD" id="cd00125">
    <property type="entry name" value="PLA2c"/>
    <property type="match status" value="1"/>
</dbReference>
<dbReference type="FunFam" id="1.20.90.10:FF:000007">
    <property type="entry name" value="Acidic phospholipase A2"/>
    <property type="match status" value="1"/>
</dbReference>
<dbReference type="Gene3D" id="1.20.90.10">
    <property type="entry name" value="Phospholipase A2 domain"/>
    <property type="match status" value="1"/>
</dbReference>
<dbReference type="InterPro" id="IPR001211">
    <property type="entry name" value="PLipase_A2"/>
</dbReference>
<dbReference type="InterPro" id="IPR016090">
    <property type="entry name" value="PLipase_A2_dom"/>
</dbReference>
<dbReference type="InterPro" id="IPR036444">
    <property type="entry name" value="PLipase_A2_dom_sf"/>
</dbReference>
<dbReference type="InterPro" id="IPR033113">
    <property type="entry name" value="PLipase_A2_His_AS"/>
</dbReference>
<dbReference type="PANTHER" id="PTHR11716:SF51">
    <property type="entry name" value="PHOSPHOLIPASE A2"/>
    <property type="match status" value="1"/>
</dbReference>
<dbReference type="PANTHER" id="PTHR11716">
    <property type="entry name" value="PHOSPHOLIPASE A2 FAMILY MEMBER"/>
    <property type="match status" value="1"/>
</dbReference>
<dbReference type="Pfam" id="PF00068">
    <property type="entry name" value="Phospholip_A2_1"/>
    <property type="match status" value="1"/>
</dbReference>
<dbReference type="PRINTS" id="PR00389">
    <property type="entry name" value="PHPHLIPASEA2"/>
</dbReference>
<dbReference type="SMART" id="SM00085">
    <property type="entry name" value="PA2c"/>
    <property type="match status" value="1"/>
</dbReference>
<dbReference type="SUPFAM" id="SSF48619">
    <property type="entry name" value="Phospholipase A2, PLA2"/>
    <property type="match status" value="1"/>
</dbReference>
<dbReference type="PROSITE" id="PS00118">
    <property type="entry name" value="PA2_HIS"/>
    <property type="match status" value="1"/>
</dbReference>
<reference key="1">
    <citation type="journal article" date="2000" name="Arch. Biochem. Biophys.">
        <title>Phospholipase A(2) with platelet aggregation inhibitor activity from Austrelaps superbus venom: protein purification and cDNA cloning.</title>
        <authorList>
            <person name="Singh S.B."/>
            <person name="Armugam A."/>
            <person name="Kini R.M."/>
            <person name="Jeyaseelan K."/>
        </authorList>
    </citation>
    <scope>NUCLEOTIDE SEQUENCE [MRNA]</scope>
    <source>
        <tissue>Venom gland</tissue>
    </source>
</reference>
<name>PA2A1_AUSSU</name>
<evidence type="ECO:0000250" key="1"/>
<evidence type="ECO:0000255" key="2"/>
<evidence type="ECO:0000255" key="3">
    <source>
        <dbReference type="PROSITE-ProRule" id="PRU10035"/>
    </source>
</evidence>
<evidence type="ECO:0000305" key="4"/>
<feature type="signal peptide" evidence="2">
    <location>
        <begin position="1"/>
        <end position="19"/>
    </location>
</feature>
<feature type="propeptide" id="PRO_0000022789" evidence="2">
    <location>
        <begin position="20"/>
        <end position="27"/>
    </location>
</feature>
<feature type="chain" id="PRO_0000022790" description="Acidic phospholipase A2 S1-11">
    <location>
        <begin position="28"/>
        <end position="145"/>
    </location>
</feature>
<feature type="active site" evidence="3">
    <location>
        <position position="75"/>
    </location>
</feature>
<feature type="active site" evidence="3">
    <location>
        <position position="121"/>
    </location>
</feature>
<feature type="binding site" evidence="1">
    <location>
        <position position="55"/>
    </location>
    <ligand>
        <name>Ca(2+)</name>
        <dbReference type="ChEBI" id="CHEBI:29108"/>
    </ligand>
</feature>
<feature type="binding site" evidence="1">
    <location>
        <position position="57"/>
    </location>
    <ligand>
        <name>Ca(2+)</name>
        <dbReference type="ChEBI" id="CHEBI:29108"/>
    </ligand>
</feature>
<feature type="binding site" evidence="1">
    <location>
        <position position="59"/>
    </location>
    <ligand>
        <name>Ca(2+)</name>
        <dbReference type="ChEBI" id="CHEBI:29108"/>
    </ligand>
</feature>
<feature type="binding site" evidence="1">
    <location>
        <position position="76"/>
    </location>
    <ligand>
        <name>Ca(2+)</name>
        <dbReference type="ChEBI" id="CHEBI:29108"/>
    </ligand>
</feature>
<feature type="disulfide bond" evidence="1">
    <location>
        <begin position="38"/>
        <end position="99"/>
    </location>
</feature>
<feature type="disulfide bond" evidence="1">
    <location>
        <begin position="54"/>
        <end position="144"/>
    </location>
</feature>
<feature type="disulfide bond" evidence="1">
    <location>
        <begin position="56"/>
        <end position="72"/>
    </location>
</feature>
<feature type="disulfide bond" evidence="1">
    <location>
        <begin position="71"/>
        <end position="127"/>
    </location>
</feature>
<feature type="disulfide bond" evidence="1">
    <location>
        <begin position="106"/>
        <end position="118"/>
    </location>
</feature>
<organism>
    <name type="scientific">Austrelaps superbus</name>
    <name type="common">Lowland copperhead snake</name>
    <name type="synonym">Hoplocephalus superbus</name>
    <dbReference type="NCBI Taxonomy" id="29156"/>
    <lineage>
        <taxon>Eukaryota</taxon>
        <taxon>Metazoa</taxon>
        <taxon>Chordata</taxon>
        <taxon>Craniata</taxon>
        <taxon>Vertebrata</taxon>
        <taxon>Euteleostomi</taxon>
        <taxon>Lepidosauria</taxon>
        <taxon>Squamata</taxon>
        <taxon>Bifurcata</taxon>
        <taxon>Unidentata</taxon>
        <taxon>Episquamata</taxon>
        <taxon>Toxicofera</taxon>
        <taxon>Serpentes</taxon>
        <taxon>Colubroidea</taxon>
        <taxon>Elapidae</taxon>
        <taxon>Hydrophiinae</taxon>
        <taxon>Austrelaps</taxon>
    </lineage>
</organism>
<accession>Q9PRG0</accession>
<protein>
    <recommendedName>
        <fullName>Acidic phospholipase A2 S1-11</fullName>
        <shortName>svPLA2</shortName>
        <ecNumber>3.1.1.4</ecNumber>
    </recommendedName>
    <alternativeName>
        <fullName>ASPLA1</fullName>
    </alternativeName>
    <alternativeName>
        <fullName>ASPLA3</fullName>
    </alternativeName>
    <alternativeName>
        <fullName>Phosphatidylcholine 2-acylhydrolase</fullName>
    </alternativeName>
</protein>
<comment type="function">
    <text evidence="1">Snake venom phospholipase A2 (PLA2) that inhibits collagen-induced platelet aggregation. PLA2 catalyzes the calcium-dependent hydrolysis of the 2-acyl groups in 3-sn-phosphoglycerides (By similarity).</text>
</comment>
<comment type="catalytic activity">
    <reaction evidence="3">
        <text>a 1,2-diacyl-sn-glycero-3-phosphocholine + H2O = a 1-acyl-sn-glycero-3-phosphocholine + a fatty acid + H(+)</text>
        <dbReference type="Rhea" id="RHEA:15801"/>
        <dbReference type="ChEBI" id="CHEBI:15377"/>
        <dbReference type="ChEBI" id="CHEBI:15378"/>
        <dbReference type="ChEBI" id="CHEBI:28868"/>
        <dbReference type="ChEBI" id="CHEBI:57643"/>
        <dbReference type="ChEBI" id="CHEBI:58168"/>
        <dbReference type="EC" id="3.1.1.4"/>
    </reaction>
</comment>
<comment type="cofactor">
    <cofactor evidence="1">
        <name>Ca(2+)</name>
        <dbReference type="ChEBI" id="CHEBI:29108"/>
    </cofactor>
    <text evidence="1">Binds 1 Ca(2+) ion.</text>
</comment>
<comment type="subcellular location">
    <subcellularLocation>
        <location evidence="1">Secreted</location>
    </subcellularLocation>
</comment>
<comment type="tissue specificity">
    <text>Expressed by the venom gland.</text>
</comment>
<comment type="PTM">
    <text>This enzyme lacks two of the seven disulfide bonds found in similar PLA2 proteins.</text>
</comment>
<comment type="similarity">
    <text evidence="4">Belongs to the phospholipase A2 family. Group I subfamily. D49 sub-subfamily.</text>
</comment>
<sequence>MYPAHLLVLLAVCVSLLGASDMPPQPLNLVQFSNMIQCANHGRRPTSNYMDYGCYCGKGGSGTPVDELDRCCKIHDDCYGEAEKSQKCAPYWTWYTWKCGSDGPQCDDSETGSRRFVCGYDATAAKCFAKAPYNKENYNIETRCQ</sequence>